<gene>
    <name type="primary">col-99</name>
    <name type="ORF">F29C4.8</name>
</gene>
<reference key="1">
    <citation type="journal article" date="1998" name="Science">
        <title>Genome sequence of the nematode C. elegans: a platform for investigating biology.</title>
        <authorList>
            <consortium name="The C. elegans sequencing consortium"/>
        </authorList>
    </citation>
    <scope>NUCLEOTIDE SEQUENCE [LARGE SCALE GENOMIC DNA]</scope>
    <scope>ALTERNATIVE SPLICING</scope>
    <source>
        <strain>Bristol N2</strain>
    </source>
</reference>
<reference key="2">
    <citation type="journal article" date="2003" name="Nat. Biotechnol.">
        <title>Lectin affinity capture, isotope-coded tagging and mass spectrometry to identify N-linked glycoproteins.</title>
        <authorList>
            <person name="Kaji H."/>
            <person name="Saito H."/>
            <person name="Yamauchi Y."/>
            <person name="Shinkawa T."/>
            <person name="Taoka M."/>
            <person name="Hirabayashi J."/>
            <person name="Kasai K."/>
            <person name="Takahashi N."/>
            <person name="Isobe T."/>
        </authorList>
    </citation>
    <scope>GLYCOSYLATION [LARGE SCALE ANALYSIS] AT ASN-474</scope>
    <scope>IDENTIFICATION BY MASS SPECTROMETRY</scope>
    <source>
        <strain>Bristol N2</strain>
    </source>
</reference>
<reference key="3">
    <citation type="journal article" date="2007" name="Mol. Cell. Proteomics">
        <title>Proteomics reveals N-linked glycoprotein diversity in Caenorhabditis elegans and suggests an atypical translocation mechanism for integral membrane proteins.</title>
        <authorList>
            <person name="Kaji H."/>
            <person name="Kamiie J."/>
            <person name="Kawakami H."/>
            <person name="Kido K."/>
            <person name="Yamauchi Y."/>
            <person name="Shinkawa T."/>
            <person name="Taoka M."/>
            <person name="Takahashi N."/>
            <person name="Isobe T."/>
        </authorList>
    </citation>
    <scope>GLYCOSYLATION [LARGE SCALE ANALYSIS] AT ASN-474</scope>
    <scope>IDENTIFICATION BY MASS SPECTROMETRY</scope>
    <source>
        <strain>Bristol N2</strain>
    </source>
</reference>
<proteinExistence type="evidence at protein level"/>
<dbReference type="EMBL" id="FO080227">
    <property type="protein sequence ID" value="CCD62185.1"/>
    <property type="molecule type" value="Genomic_DNA"/>
</dbReference>
<dbReference type="EMBL" id="FO080227">
    <property type="protein sequence ID" value="CCD62186.1"/>
    <property type="molecule type" value="Genomic_DNA"/>
</dbReference>
<dbReference type="PIR" id="T33149">
    <property type="entry name" value="T33149"/>
</dbReference>
<dbReference type="RefSeq" id="NP_001122775.2">
    <molecule id="O76368-1"/>
    <property type="nucleotide sequence ID" value="NM_001129303.4"/>
</dbReference>
<dbReference type="RefSeq" id="NP_499869.3">
    <molecule id="O76368-2"/>
    <property type="nucleotide sequence ID" value="NM_067468.7"/>
</dbReference>
<dbReference type="BioGRID" id="49891">
    <property type="interactions" value="1"/>
</dbReference>
<dbReference type="FunCoup" id="O76368">
    <property type="interactions" value="140"/>
</dbReference>
<dbReference type="STRING" id="6239.F29C4.8j.1"/>
<dbReference type="GlyCosmos" id="O76368">
    <property type="glycosylation" value="1 site, No reported glycans"/>
</dbReference>
<dbReference type="iPTMnet" id="O76368"/>
<dbReference type="PaxDb" id="6239-F29C4.8b"/>
<dbReference type="PeptideAtlas" id="O76368"/>
<dbReference type="EnsemblMetazoa" id="F29C4.8a.1">
    <molecule id="O76368-2"/>
    <property type="protein sequence ID" value="F29C4.8a.1"/>
    <property type="gene ID" value="WBGene00000674"/>
</dbReference>
<dbReference type="EnsemblMetazoa" id="F29C4.8b.1">
    <molecule id="O76368-1"/>
    <property type="protein sequence ID" value="F29C4.8b.1"/>
    <property type="gene ID" value="WBGene00000674"/>
</dbReference>
<dbReference type="GeneID" id="185112"/>
<dbReference type="KEGG" id="cel:CELE_F29C4.8"/>
<dbReference type="UCSC" id="F29C4.8b">
    <property type="organism name" value="c. elegans"/>
</dbReference>
<dbReference type="AGR" id="WB:WBGene00000674"/>
<dbReference type="CTD" id="185112"/>
<dbReference type="WormBase" id="F29C4.8a">
    <molecule id="O76368-2"/>
    <property type="protein sequence ID" value="CE46547"/>
    <property type="gene ID" value="WBGene00000674"/>
    <property type="gene designation" value="col-99"/>
</dbReference>
<dbReference type="WormBase" id="F29C4.8b">
    <molecule id="O76368-1"/>
    <property type="protein sequence ID" value="CE46192"/>
    <property type="gene ID" value="WBGene00000674"/>
    <property type="gene designation" value="col-99"/>
</dbReference>
<dbReference type="eggNOG" id="KOG3544">
    <property type="taxonomic scope" value="Eukaryota"/>
</dbReference>
<dbReference type="InParanoid" id="O76368"/>
<dbReference type="OMA" id="CSWKPME"/>
<dbReference type="OrthoDB" id="8964326at2759"/>
<dbReference type="PhylomeDB" id="O76368"/>
<dbReference type="Reactome" id="R-CEL-1442490">
    <property type="pathway name" value="Collagen degradation"/>
</dbReference>
<dbReference type="Reactome" id="R-CEL-1650814">
    <property type="pathway name" value="Collagen biosynthesis and modifying enzymes"/>
</dbReference>
<dbReference type="Reactome" id="R-CEL-2022090">
    <property type="pathway name" value="Assembly of collagen fibrils and other multimeric structures"/>
</dbReference>
<dbReference type="Reactome" id="R-CEL-216083">
    <property type="pathway name" value="Integrin cell surface interactions"/>
</dbReference>
<dbReference type="Reactome" id="R-CEL-3000171">
    <property type="pathway name" value="Non-integrin membrane-ECM interactions"/>
</dbReference>
<dbReference type="Reactome" id="R-CEL-8874081">
    <property type="pathway name" value="MET activates PTK2 signaling"/>
</dbReference>
<dbReference type="Reactome" id="R-CEL-8948216">
    <property type="pathway name" value="Collagen chain trimerization"/>
</dbReference>
<dbReference type="PRO" id="PR:O76368"/>
<dbReference type="Proteomes" id="UP000001940">
    <property type="component" value="Chromosome IV"/>
</dbReference>
<dbReference type="Bgee" id="WBGene00000674">
    <property type="expression patterns" value="Expressed in pharyngeal muscle cell (C elegans) and 3 other cell types or tissues"/>
</dbReference>
<dbReference type="ExpressionAtlas" id="O76368">
    <property type="expression patterns" value="baseline"/>
</dbReference>
<dbReference type="GO" id="GO:0005581">
    <property type="term" value="C:collagen trimer"/>
    <property type="evidence" value="ECO:0000314"/>
    <property type="project" value="WormBase"/>
</dbReference>
<dbReference type="GO" id="GO:0005587">
    <property type="term" value="C:collagen type IV trimer"/>
    <property type="evidence" value="ECO:0000318"/>
    <property type="project" value="GO_Central"/>
</dbReference>
<dbReference type="GO" id="GO:0031012">
    <property type="term" value="C:extracellular matrix"/>
    <property type="evidence" value="ECO:0000318"/>
    <property type="project" value="GO_Central"/>
</dbReference>
<dbReference type="GO" id="GO:0005615">
    <property type="term" value="C:extracellular space"/>
    <property type="evidence" value="ECO:0000314"/>
    <property type="project" value="WormBase"/>
</dbReference>
<dbReference type="GO" id="GO:0031594">
    <property type="term" value="C:neuromuscular junction"/>
    <property type="evidence" value="ECO:0000314"/>
    <property type="project" value="WormBase"/>
</dbReference>
<dbReference type="GO" id="GO:0005886">
    <property type="term" value="C:plasma membrane"/>
    <property type="evidence" value="ECO:0000314"/>
    <property type="project" value="WormBase"/>
</dbReference>
<dbReference type="GO" id="GO:0030020">
    <property type="term" value="F:extracellular matrix structural constituent conferring tensile strength"/>
    <property type="evidence" value="ECO:0000318"/>
    <property type="project" value="GO_Central"/>
</dbReference>
<dbReference type="GO" id="GO:0042302">
    <property type="term" value="F:structural constituent of cuticle"/>
    <property type="evidence" value="ECO:0007669"/>
    <property type="project" value="UniProtKB-KW"/>
</dbReference>
<dbReference type="GO" id="GO:0007411">
    <property type="term" value="P:axon guidance"/>
    <property type="evidence" value="ECO:0000315"/>
    <property type="project" value="WormBase"/>
</dbReference>
<dbReference type="InterPro" id="IPR008160">
    <property type="entry name" value="Collagen"/>
</dbReference>
<dbReference type="InterPro" id="IPR050149">
    <property type="entry name" value="Collagen_superfamily"/>
</dbReference>
<dbReference type="PANTHER" id="PTHR24023">
    <property type="entry name" value="COLLAGEN ALPHA"/>
    <property type="match status" value="1"/>
</dbReference>
<dbReference type="PANTHER" id="PTHR24023:SF1092">
    <property type="entry name" value="CUTICLE COLLAGEN 99-RELATED"/>
    <property type="match status" value="1"/>
</dbReference>
<dbReference type="Pfam" id="PF01391">
    <property type="entry name" value="Collagen"/>
    <property type="match status" value="4"/>
</dbReference>
<protein>
    <recommendedName>
        <fullName>Putative cuticle collagen 99</fullName>
    </recommendedName>
</protein>
<keyword id="KW-0025">Alternative splicing</keyword>
<keyword id="KW-0176">Collagen</keyword>
<keyword id="KW-0193">Cuticle</keyword>
<keyword id="KW-1015">Disulfide bond</keyword>
<keyword id="KW-0325">Glycoprotein</keyword>
<keyword id="KW-1185">Reference proteome</keyword>
<keyword id="KW-0677">Repeat</keyword>
<keyword id="KW-0732">Signal</keyword>
<organism>
    <name type="scientific">Caenorhabditis elegans</name>
    <dbReference type="NCBI Taxonomy" id="6239"/>
    <lineage>
        <taxon>Eukaryota</taxon>
        <taxon>Metazoa</taxon>
        <taxon>Ecdysozoa</taxon>
        <taxon>Nematoda</taxon>
        <taxon>Chromadorea</taxon>
        <taxon>Rhabditida</taxon>
        <taxon>Rhabditina</taxon>
        <taxon>Rhabditomorpha</taxon>
        <taxon>Rhabditoidea</taxon>
        <taxon>Rhabditidae</taxon>
        <taxon>Peloderinae</taxon>
        <taxon>Caenorhabditis</taxon>
    </lineage>
</organism>
<accession>O76368</accession>
<accession>A8WIS7</accession>
<feature type="signal peptide" evidence="2">
    <location>
        <begin position="1"/>
        <end status="unknown"/>
    </location>
</feature>
<feature type="chain" id="PRO_0000250375" description="Putative cuticle collagen 99">
    <location>
        <begin status="unknown"/>
        <end position="716"/>
    </location>
</feature>
<feature type="region of interest" description="Disordered" evidence="3">
    <location>
        <begin position="85"/>
        <end position="122"/>
    </location>
</feature>
<feature type="region of interest" description="Triple-helical region">
    <location>
        <begin position="179"/>
        <end position="238"/>
    </location>
</feature>
<feature type="region of interest" description="Disordered" evidence="3">
    <location>
        <begin position="183"/>
        <end position="472"/>
    </location>
</feature>
<feature type="region of interest" description="Triple-helical region">
    <location>
        <begin position="265"/>
        <end position="298"/>
    </location>
</feature>
<feature type="region of interest" description="Triple-helical region">
    <location>
        <begin position="302"/>
        <end position="330"/>
    </location>
</feature>
<feature type="region of interest" description="Triple-helical region">
    <location>
        <begin position="385"/>
        <end position="411"/>
    </location>
</feature>
<feature type="region of interest" description="Triple-helical region">
    <location>
        <begin position="422"/>
        <end position="467"/>
    </location>
</feature>
<feature type="region of interest" description="Disordered" evidence="3">
    <location>
        <begin position="503"/>
        <end position="716"/>
    </location>
</feature>
<feature type="region of interest" description="Triple-helical region">
    <location>
        <begin position="507"/>
        <end position="557"/>
    </location>
</feature>
<feature type="region of interest" description="Triple-helical region">
    <location>
        <begin position="566"/>
        <end position="603"/>
    </location>
</feature>
<feature type="region of interest" description="Triple-helical region">
    <location>
        <begin position="605"/>
        <end position="664"/>
    </location>
</feature>
<feature type="compositionally biased region" description="Pro residues" evidence="3">
    <location>
        <begin position="266"/>
        <end position="277"/>
    </location>
</feature>
<feature type="compositionally biased region" description="Basic and acidic residues" evidence="3">
    <location>
        <begin position="280"/>
        <end position="290"/>
    </location>
</feature>
<feature type="compositionally biased region" description="Pro residues" evidence="3">
    <location>
        <begin position="349"/>
        <end position="358"/>
    </location>
</feature>
<feature type="compositionally biased region" description="Basic and acidic residues" evidence="3">
    <location>
        <begin position="389"/>
        <end position="401"/>
    </location>
</feature>
<feature type="compositionally biased region" description="Low complexity" evidence="3">
    <location>
        <begin position="402"/>
        <end position="422"/>
    </location>
</feature>
<feature type="compositionally biased region" description="Basic and acidic residues" evidence="3">
    <location>
        <begin position="429"/>
        <end position="444"/>
    </location>
</feature>
<feature type="compositionally biased region" description="Pro residues" evidence="3">
    <location>
        <begin position="568"/>
        <end position="577"/>
    </location>
</feature>
<feature type="glycosylation site" description="N-linked (GlcNAc...) asparagine" evidence="4 5">
    <location>
        <position position="474"/>
    </location>
</feature>
<feature type="splice variant" id="VSP_036609" description="In isoform a." evidence="6">
    <location>
        <begin position="126"/>
        <end position="134"/>
    </location>
</feature>
<name>COL99_CAEEL</name>
<evidence type="ECO:0000250" key="1"/>
<evidence type="ECO:0000255" key="2"/>
<evidence type="ECO:0000256" key="3">
    <source>
        <dbReference type="SAM" id="MobiDB-lite"/>
    </source>
</evidence>
<evidence type="ECO:0000269" key="4">
    <source>
    </source>
</evidence>
<evidence type="ECO:0000269" key="5">
    <source>
    </source>
</evidence>
<evidence type="ECO:0000305" key="6"/>
<sequence>MTSPSPSGNVVVVGTDGTSSVSDRWPPQKTWISPPRVPIDRHFVTAAVPHVLMFLLVCIVFTAQQTRISTLEKRIDQLVVQIDQLPSSDSNTDDDDVAKSRRVRNSCMCPAGPPGERGPVGPPGLRGSPGWPGLPGLPAPYYRRPRVPLSNNLDESISRKMRAFGMLYSPDGQAIQLRGMPGPPGPAGPKGLRGYPGFPGPIGLDGPRGLPGTPGSKGDRGERGPLGPPGFPGPKGDRGVMTGPYVGPHAGPGPMSHHTNMGNVLPGPPGPPGPPGPAGRDGRHGLKGDRGLPGFDGESKIGPKGETGSPGRDGIPGARGPPGERGEKGDTAFLSTYPRVASSSTASSPGPPGPPGPPGVCHASQCTGIQGPPGEPGRTIIGPQGPPGEKGERGERGEPGDRGLPGAAGAANLLNGGKALVGPPGPPGRDGRPGDKGEKGEQGLRGDMGLPGPEGTPGKRGRRGRHGISLVAPNGTINEDLKKLLKTELMPLLIEDISELRGKNVIPGPPGPPGPRGHHGPVGPSGERGPQGLPGHSGERGDRGDIGPPGLPGQPGAGEISGSQSGPRGPPGLPGPPGEKGDLGPPGLPGQPGSLGLPGPPGPMGLRGPHGTEGETGKQGPEGSKGYPGPMGPQGPPGNDGEPGIDGRPGPAGEKGDQGIPGLDAPCPTGPDGLPLPYCSWKPMDGKNDVWERRKRASLPGAQPGKGAETRPPVTD</sequence>
<comment type="function">
    <text evidence="1">Nematode cuticles are composed largely of collagen-like proteins. The cuticle functions both as an exoskeleton and as a barrier to protect the worm from its environment (By similarity).</text>
</comment>
<comment type="subunit">
    <text evidence="1">Collagen polypeptide chains are complexed within the cuticle by disulfide bonds and other types of covalent cross-links.</text>
</comment>
<comment type="alternative products">
    <event type="alternative splicing"/>
    <isoform>
        <id>O76368-1</id>
        <name>b</name>
        <sequence type="displayed"/>
    </isoform>
    <isoform>
        <id>O76368-2</id>
        <name>a</name>
        <sequence type="described" ref="VSP_036609"/>
    </isoform>
</comment>
<comment type="similarity">
    <text evidence="6">Belongs to the cuticular collagen family.</text>
</comment>